<reference key="1">
    <citation type="submission" date="1999-12" db="UniProtKB">
        <title>Purification and partial characterization of antibacterial peptides from rainbow trout, Oncorhynchus mykiss.</title>
        <authorList>
            <person name="Henry M.A."/>
            <person name="Secombes C.J."/>
        </authorList>
    </citation>
    <scope>PROTEIN SEQUENCE</scope>
    <scope>FUNCTION</scope>
    <source>
        <tissue>Serum</tissue>
    </source>
</reference>
<dbReference type="Proteomes" id="UP000694395">
    <property type="component" value="Unplaced"/>
</dbReference>
<dbReference type="GO" id="GO:0005576">
    <property type="term" value="C:extracellular region"/>
    <property type="evidence" value="ECO:0007669"/>
    <property type="project" value="UniProtKB-SubCell"/>
</dbReference>
<dbReference type="GO" id="GO:0042742">
    <property type="term" value="P:defense response to bacterium"/>
    <property type="evidence" value="ECO:0007669"/>
    <property type="project" value="UniProtKB-KW"/>
</dbReference>
<protein>
    <recommendedName>
        <fullName>Salmocidin-2A</fullName>
    </recommendedName>
</protein>
<accession>P82238</accession>
<evidence type="ECO:0000269" key="1">
    <source ref="1"/>
</evidence>
<name>SAL2A_ONCMY</name>
<feature type="peptide" id="PRO_0000045108" description="Salmocidin-2A">
    <location>
        <begin position="1"/>
        <end position="13" status="greater than"/>
    </location>
</feature>
<feature type="non-terminal residue">
    <location>
        <position position="13"/>
    </location>
</feature>
<keyword id="KW-0044">Antibiotic</keyword>
<keyword id="KW-0929">Antimicrobial</keyword>
<keyword id="KW-0903">Direct protein sequencing</keyword>
<keyword id="KW-0964">Secreted</keyword>
<organism>
    <name type="scientific">Oncorhynchus mykiss</name>
    <name type="common">Rainbow trout</name>
    <name type="synonym">Salmo gairdneri</name>
    <dbReference type="NCBI Taxonomy" id="8022"/>
    <lineage>
        <taxon>Eukaryota</taxon>
        <taxon>Metazoa</taxon>
        <taxon>Chordata</taxon>
        <taxon>Craniata</taxon>
        <taxon>Vertebrata</taxon>
        <taxon>Euteleostomi</taxon>
        <taxon>Actinopterygii</taxon>
        <taxon>Neopterygii</taxon>
        <taxon>Teleostei</taxon>
        <taxon>Protacanthopterygii</taxon>
        <taxon>Salmoniformes</taxon>
        <taxon>Salmonidae</taxon>
        <taxon>Salmoninae</taxon>
        <taxon>Oncorhynchus</taxon>
    </lineage>
</organism>
<proteinExistence type="evidence at protein level"/>
<comment type="function">
    <text evidence="1">Antibacterial activity against Gram-negative bacteria.</text>
</comment>
<comment type="subcellular location">
    <subcellularLocation>
        <location>Secreted</location>
    </subcellularLocation>
</comment>
<comment type="tissue specificity">
    <text>Plasma serum.</text>
</comment>
<sequence length="13" mass="1416">SGFVLKGYTKTSQ</sequence>